<protein>
    <recommendedName>
        <fullName evidence="1">2-C-methyl-D-erythritol 4-phosphate cytidylyltransferase</fullName>
        <ecNumber evidence="1">2.7.7.60</ecNumber>
    </recommendedName>
    <alternativeName>
        <fullName evidence="1">4-diphosphocytidyl-2C-methyl-D-erythritol synthase</fullName>
    </alternativeName>
    <alternativeName>
        <fullName evidence="1">MEP cytidylyltransferase</fullName>
        <shortName evidence="1">MCT</shortName>
    </alternativeName>
</protein>
<dbReference type="EC" id="2.7.7.60" evidence="1"/>
<dbReference type="EMBL" id="CP000863">
    <property type="protein sequence ID" value="ACC57316.1"/>
    <property type="molecule type" value="Genomic_DNA"/>
</dbReference>
<dbReference type="RefSeq" id="WP_001216217.1">
    <property type="nucleotide sequence ID" value="NZ_CP031380.1"/>
</dbReference>
<dbReference type="SMR" id="B2I2A2"/>
<dbReference type="KEGG" id="abc:ACICU_02004"/>
<dbReference type="HOGENOM" id="CLU_061281_3_1_6"/>
<dbReference type="UniPathway" id="UPA00056">
    <property type="reaction ID" value="UER00093"/>
</dbReference>
<dbReference type="Proteomes" id="UP000008839">
    <property type="component" value="Chromosome"/>
</dbReference>
<dbReference type="GO" id="GO:0050518">
    <property type="term" value="F:2-C-methyl-D-erythritol 4-phosphate cytidylyltransferase activity"/>
    <property type="evidence" value="ECO:0007669"/>
    <property type="project" value="UniProtKB-UniRule"/>
</dbReference>
<dbReference type="GO" id="GO:0019288">
    <property type="term" value="P:isopentenyl diphosphate biosynthetic process, methylerythritol 4-phosphate pathway"/>
    <property type="evidence" value="ECO:0007669"/>
    <property type="project" value="UniProtKB-UniRule"/>
</dbReference>
<dbReference type="CDD" id="cd02516">
    <property type="entry name" value="CDP-ME_synthetase"/>
    <property type="match status" value="1"/>
</dbReference>
<dbReference type="FunFam" id="3.90.550.10:FF:000003">
    <property type="entry name" value="2-C-methyl-D-erythritol 4-phosphate cytidylyltransferase"/>
    <property type="match status" value="1"/>
</dbReference>
<dbReference type="Gene3D" id="3.90.550.10">
    <property type="entry name" value="Spore Coat Polysaccharide Biosynthesis Protein SpsA, Chain A"/>
    <property type="match status" value="1"/>
</dbReference>
<dbReference type="HAMAP" id="MF_00108">
    <property type="entry name" value="IspD"/>
    <property type="match status" value="1"/>
</dbReference>
<dbReference type="InterPro" id="IPR001228">
    <property type="entry name" value="IspD"/>
</dbReference>
<dbReference type="InterPro" id="IPR034683">
    <property type="entry name" value="IspD/TarI"/>
</dbReference>
<dbReference type="InterPro" id="IPR050088">
    <property type="entry name" value="IspD/TarI_cytidylyltransf_bact"/>
</dbReference>
<dbReference type="InterPro" id="IPR018294">
    <property type="entry name" value="ISPD_synthase_CS"/>
</dbReference>
<dbReference type="InterPro" id="IPR029044">
    <property type="entry name" value="Nucleotide-diphossugar_trans"/>
</dbReference>
<dbReference type="NCBIfam" id="TIGR00453">
    <property type="entry name" value="ispD"/>
    <property type="match status" value="1"/>
</dbReference>
<dbReference type="PANTHER" id="PTHR32125">
    <property type="entry name" value="2-C-METHYL-D-ERYTHRITOL 4-PHOSPHATE CYTIDYLYLTRANSFERASE, CHLOROPLASTIC"/>
    <property type="match status" value="1"/>
</dbReference>
<dbReference type="PANTHER" id="PTHR32125:SF4">
    <property type="entry name" value="2-C-METHYL-D-ERYTHRITOL 4-PHOSPHATE CYTIDYLYLTRANSFERASE, CHLOROPLASTIC"/>
    <property type="match status" value="1"/>
</dbReference>
<dbReference type="Pfam" id="PF01128">
    <property type="entry name" value="IspD"/>
    <property type="match status" value="1"/>
</dbReference>
<dbReference type="SUPFAM" id="SSF53448">
    <property type="entry name" value="Nucleotide-diphospho-sugar transferases"/>
    <property type="match status" value="1"/>
</dbReference>
<dbReference type="PROSITE" id="PS01295">
    <property type="entry name" value="ISPD"/>
    <property type="match status" value="1"/>
</dbReference>
<evidence type="ECO:0000255" key="1">
    <source>
        <dbReference type="HAMAP-Rule" id="MF_00108"/>
    </source>
</evidence>
<comment type="function">
    <text evidence="1">Catalyzes the formation of 4-diphosphocytidyl-2-C-methyl-D-erythritol from CTP and 2-C-methyl-D-erythritol 4-phosphate (MEP).</text>
</comment>
<comment type="catalytic activity">
    <reaction evidence="1">
        <text>2-C-methyl-D-erythritol 4-phosphate + CTP + H(+) = 4-CDP-2-C-methyl-D-erythritol + diphosphate</text>
        <dbReference type="Rhea" id="RHEA:13429"/>
        <dbReference type="ChEBI" id="CHEBI:15378"/>
        <dbReference type="ChEBI" id="CHEBI:33019"/>
        <dbReference type="ChEBI" id="CHEBI:37563"/>
        <dbReference type="ChEBI" id="CHEBI:57823"/>
        <dbReference type="ChEBI" id="CHEBI:58262"/>
        <dbReference type="EC" id="2.7.7.60"/>
    </reaction>
</comment>
<comment type="pathway">
    <text evidence="1">Isoprenoid biosynthesis; isopentenyl diphosphate biosynthesis via DXP pathway; isopentenyl diphosphate from 1-deoxy-D-xylulose 5-phosphate: step 2/6.</text>
</comment>
<comment type="similarity">
    <text evidence="1">Belongs to the IspD/TarI cytidylyltransferase family. IspD subfamily.</text>
</comment>
<name>ISPD_ACIBC</name>
<gene>
    <name evidence="1" type="primary">ispD</name>
    <name type="ordered locus">ACICU_02004</name>
</gene>
<feature type="chain" id="PRO_1000094301" description="2-C-methyl-D-erythritol 4-phosphate cytidylyltransferase">
    <location>
        <begin position="1"/>
        <end position="238"/>
    </location>
</feature>
<feature type="site" description="Transition state stabilizer" evidence="1">
    <location>
        <position position="25"/>
    </location>
</feature>
<feature type="site" description="Transition state stabilizer" evidence="1">
    <location>
        <position position="32"/>
    </location>
</feature>
<feature type="site" description="Positions MEP for the nucleophilic attack" evidence="1">
    <location>
        <position position="164"/>
    </location>
</feature>
<feature type="site" description="Positions MEP for the nucleophilic attack" evidence="1">
    <location>
        <position position="220"/>
    </location>
</feature>
<proteinExistence type="inferred from homology"/>
<reference key="1">
    <citation type="journal article" date="2008" name="Antimicrob. Agents Chemother.">
        <title>Whole-genome pyrosequencing of an epidemic multidrug-resistant Acinetobacter baumannii strain belonging to the European clone II group.</title>
        <authorList>
            <person name="Iacono M."/>
            <person name="Villa L."/>
            <person name="Fortini D."/>
            <person name="Bordoni R."/>
            <person name="Imperi F."/>
            <person name="Bonnal R.J."/>
            <person name="Sicheritz-Ponten T."/>
            <person name="De Bellis G."/>
            <person name="Visca P."/>
            <person name="Cassone A."/>
            <person name="Carattoli A."/>
        </authorList>
    </citation>
    <scope>NUCLEOTIDE SEQUENCE [LARGE SCALE GENOMIC DNA]</scope>
    <source>
        <strain>ACICU</strain>
    </source>
</reference>
<accession>B2I2A2</accession>
<sequence length="238" mass="26569">MRHLHHQTSQTKLWAVIPAAGSGSRFSKTELKQYQYIQDATVIEHTVKRLSQLPLTGYVLAIGKQDTFASTLSFQDKHKAHFCNGGVERVHSVLNALNYLSQIADEDDWVLVHDAARPCVTFECLNTLVKNAIETNQSAILAIPVRDTLKQVNQEQQIDKTVSRELLWQAQTPQIAKIGILKKAIETALKNNLTITDEASALESIGESVLVVMGRSDNIKITYPDDLELARLILQSQN</sequence>
<organism>
    <name type="scientific">Acinetobacter baumannii (strain ACICU)</name>
    <dbReference type="NCBI Taxonomy" id="405416"/>
    <lineage>
        <taxon>Bacteria</taxon>
        <taxon>Pseudomonadati</taxon>
        <taxon>Pseudomonadota</taxon>
        <taxon>Gammaproteobacteria</taxon>
        <taxon>Moraxellales</taxon>
        <taxon>Moraxellaceae</taxon>
        <taxon>Acinetobacter</taxon>
        <taxon>Acinetobacter calcoaceticus/baumannii complex</taxon>
    </lineage>
</organism>
<keyword id="KW-0414">Isoprene biosynthesis</keyword>
<keyword id="KW-0548">Nucleotidyltransferase</keyword>
<keyword id="KW-0808">Transferase</keyword>